<dbReference type="EMBL" id="AY588474">
    <property type="protein sequence ID" value="AAT94401.1"/>
    <property type="molecule type" value="mRNA"/>
</dbReference>
<dbReference type="RefSeq" id="NP_001011638.1">
    <property type="nucleotide sequence ID" value="NM_001011638.1"/>
</dbReference>
<dbReference type="SMR" id="Q5MQL3"/>
<dbReference type="FunCoup" id="Q5MQL3">
    <property type="interactions" value="40"/>
</dbReference>
<dbReference type="STRING" id="7460.Q5MQL3"/>
<dbReference type="PaxDb" id="7460-GB47618-PA"/>
<dbReference type="EnsemblMetazoa" id="NM_001011638">
    <property type="protein sequence ID" value="NP_001011638"/>
    <property type="gene ID" value="GeneID_413397"/>
</dbReference>
<dbReference type="GeneID" id="413397"/>
<dbReference type="KEGG" id="ame:413397"/>
<dbReference type="CTD" id="127064953"/>
<dbReference type="eggNOG" id="ENOG502T7D8">
    <property type="taxonomic scope" value="Eukaryota"/>
</dbReference>
<dbReference type="InParanoid" id="Q5MQL3"/>
<dbReference type="PhylomeDB" id="Q5MQL3"/>
<dbReference type="Proteomes" id="UP000005203">
    <property type="component" value="Linkage group LG16"/>
</dbReference>
<dbReference type="GO" id="GO:0005615">
    <property type="term" value="C:extracellular space"/>
    <property type="evidence" value="ECO:0007669"/>
    <property type="project" value="TreeGrafter"/>
</dbReference>
<dbReference type="GO" id="GO:0042742">
    <property type="term" value="P:defense response to bacterium"/>
    <property type="evidence" value="ECO:0007669"/>
    <property type="project" value="UniProtKB-KW"/>
</dbReference>
<dbReference type="GO" id="GO:0006959">
    <property type="term" value="P:humoral immune response"/>
    <property type="evidence" value="ECO:0007669"/>
    <property type="project" value="TreeGrafter"/>
</dbReference>
<dbReference type="GO" id="GO:0045087">
    <property type="term" value="P:innate immune response"/>
    <property type="evidence" value="ECO:0007669"/>
    <property type="project" value="UniProtKB-KW"/>
</dbReference>
<dbReference type="CDD" id="cd21806">
    <property type="entry name" value="DEFL_defensin-like"/>
    <property type="match status" value="1"/>
</dbReference>
<dbReference type="Gene3D" id="3.30.30.10">
    <property type="entry name" value="Knottin, scorpion toxin-like"/>
    <property type="match status" value="1"/>
</dbReference>
<dbReference type="InterPro" id="IPR001542">
    <property type="entry name" value="Defensin_invertebrate/fungal"/>
</dbReference>
<dbReference type="InterPro" id="IPR003614">
    <property type="entry name" value="Scorpion_toxin-like"/>
</dbReference>
<dbReference type="InterPro" id="IPR036574">
    <property type="entry name" value="Scorpion_toxin-like_sf"/>
</dbReference>
<dbReference type="PANTHER" id="PTHR13645">
    <property type="entry name" value="DEFENSIN"/>
    <property type="match status" value="1"/>
</dbReference>
<dbReference type="PANTHER" id="PTHR13645:SF0">
    <property type="entry name" value="DEFENSIN"/>
    <property type="match status" value="1"/>
</dbReference>
<dbReference type="Pfam" id="PF01097">
    <property type="entry name" value="Defensin_2"/>
    <property type="match status" value="1"/>
</dbReference>
<dbReference type="SMART" id="SM00505">
    <property type="entry name" value="Knot1"/>
    <property type="match status" value="1"/>
</dbReference>
<dbReference type="SUPFAM" id="SSF57095">
    <property type="entry name" value="Scorpion toxin-like"/>
    <property type="match status" value="1"/>
</dbReference>
<dbReference type="PROSITE" id="PS51378">
    <property type="entry name" value="INVERT_DEFENSINS"/>
    <property type="match status" value="1"/>
</dbReference>
<keyword id="KW-0044">Antibiotic</keyword>
<keyword id="KW-0929">Antimicrobial</keyword>
<keyword id="KW-0211">Defensin</keyword>
<keyword id="KW-1015">Disulfide bond</keyword>
<keyword id="KW-0391">Immunity</keyword>
<keyword id="KW-0399">Innate immunity</keyword>
<keyword id="KW-1185">Reference proteome</keyword>
<keyword id="KW-0964">Secreted</keyword>
<keyword id="KW-0732">Signal</keyword>
<accession>Q5MQL3</accession>
<feature type="signal peptide" evidence="1">
    <location>
        <begin position="1"/>
        <end position="19"/>
    </location>
</feature>
<feature type="chain" id="PRO_0000394508" description="Defensin-2">
    <location>
        <begin position="20"/>
        <end position="104"/>
    </location>
</feature>
<feature type="disulfide bond" evidence="2">
    <location>
        <begin position="64"/>
        <end position="95"/>
    </location>
</feature>
<feature type="disulfide bond" evidence="2">
    <location>
        <begin position="81"/>
        <end position="100"/>
    </location>
</feature>
<feature type="disulfide bond" evidence="2">
    <location>
        <begin position="85"/>
        <end position="102"/>
    </location>
</feature>
<name>DEF2_APIME</name>
<proteinExistence type="evidence at transcript level"/>
<evidence type="ECO:0000255" key="1"/>
<evidence type="ECO:0000255" key="2">
    <source>
        <dbReference type="PROSITE-ProRule" id="PRU00710"/>
    </source>
</evidence>
<protein>
    <recommendedName>
        <fullName>Defensin-2</fullName>
    </recommendedName>
</protein>
<organism>
    <name type="scientific">Apis mellifera</name>
    <name type="common">Honeybee</name>
    <dbReference type="NCBI Taxonomy" id="7460"/>
    <lineage>
        <taxon>Eukaryota</taxon>
        <taxon>Metazoa</taxon>
        <taxon>Ecdysozoa</taxon>
        <taxon>Arthropoda</taxon>
        <taxon>Hexapoda</taxon>
        <taxon>Insecta</taxon>
        <taxon>Pterygota</taxon>
        <taxon>Neoptera</taxon>
        <taxon>Endopterygota</taxon>
        <taxon>Hymenoptera</taxon>
        <taxon>Apocrita</taxon>
        <taxon>Aculeata</taxon>
        <taxon>Apoidea</taxon>
        <taxon>Anthophila</taxon>
        <taxon>Apidae</taxon>
        <taxon>Apis</taxon>
    </lineage>
</organism>
<reference key="1">
    <citation type="journal article" date="2005" name="Insect Biochem. Mol. Biol.">
        <title>Two structurally different defensin genes, one of them encoding a novel defensin isoform, are expressed in honeybee Apis mellifera.</title>
        <authorList>
            <person name="Klaudiny J."/>
            <person name="Albert S."/>
            <person name="Bachanova K."/>
            <person name="Kopernicky J."/>
            <person name="Simuth J."/>
        </authorList>
    </citation>
    <scope>NUCLEOTIDE SEQUENCE [GENOMIC DNA / MRNA]</scope>
</reference>
<comment type="function">
    <text evidence="2">Antibacterial peptide mostly active against Gram-positive bacteria.</text>
</comment>
<comment type="subcellular location">
    <subcellularLocation>
        <location evidence="2">Secreted</location>
    </subcellularLocation>
</comment>
<comment type="tissue specificity">
    <text>Low expression in head and thorax.</text>
</comment>
<comment type="similarity">
    <text evidence="2">Belongs to the invertebrate defensin family. Type 1 subfamily.</text>
</comment>
<sequence length="104" mass="11859">MKFFVLFAILIAIVHASCASVPKVVYDGPIYELRQIEEENIEPDTELMDSNEPLLPLRHRRVTCDVLSWQSKWLSINHSACAIRCLAQRRKGGSCRNGVCICRK</sequence>